<sequence>MLLLPLSVLLLLTQPWRSLGAEMKIYSQKTLANGCTLVVCRPPEGGLPGRDGQDGREGPQGEKGDPGSPGPAGRAGRPGPAGPIGPKGDNGSAGEPGPKGDTGPPGPPGMPGPAGREGPSGKQGSMGPPGTPGPKGDTGPKGGMGAPGMQGSPGPAGLKGERGAPGELGAPGSAGVAGPAGAIGPQGPSGARGPPGLKGDRGDPGERGAKGESGLADVNALKQRVTILEGQLQRLQNAFSRYKKAVLFPDGQAVGKKIFKTAGAVKSYSDAQQLCREAKGQLASPRSAAENEAVAQLVRAKNNDAFLSMNDISTEGKFTYPTGESLVYSNWASGEPNNNNAGQPENCVQIYREGKWNDVPCSEPLLVICEF</sequence>
<proteinExistence type="evidence at transcript level"/>
<protein>
    <recommendedName>
        <fullName>Collectin-46</fullName>
        <shortName>CL-46</shortName>
    </recommendedName>
    <alternativeName>
        <fullName>46 kDa collectin</fullName>
    </alternativeName>
</protein>
<organism>
    <name type="scientific">Bos taurus</name>
    <name type="common">Bovine</name>
    <dbReference type="NCBI Taxonomy" id="9913"/>
    <lineage>
        <taxon>Eukaryota</taxon>
        <taxon>Metazoa</taxon>
        <taxon>Chordata</taxon>
        <taxon>Craniata</taxon>
        <taxon>Vertebrata</taxon>
        <taxon>Euteleostomi</taxon>
        <taxon>Mammalia</taxon>
        <taxon>Eutheria</taxon>
        <taxon>Laurasiatheria</taxon>
        <taxon>Artiodactyla</taxon>
        <taxon>Ruminantia</taxon>
        <taxon>Pecora</taxon>
        <taxon>Bovidae</taxon>
        <taxon>Bovinae</taxon>
        <taxon>Bos</taxon>
    </lineage>
</organism>
<reference key="1">
    <citation type="journal article" date="2002" name="J. Immunol.">
        <title>CL-46, a novel collectin highly expressed in bovine thymus and liver.</title>
        <authorList>
            <person name="Hansen S."/>
            <person name="Holm D."/>
            <person name="Moeller V."/>
            <person name="Vitved L."/>
            <person name="Bendixen C."/>
            <person name="Reid K.B.M."/>
            <person name="Skjoedt K."/>
            <person name="Holmskov U."/>
        </authorList>
    </citation>
    <scope>NUCLEOTIDE SEQUENCE [GENOMIC DNA / MRNA]</scope>
</reference>
<comment type="subunit">
    <text evidence="1">Oligomeric complex of 4 set of homotrimers.</text>
</comment>
<comment type="subcellular location">
    <subcellularLocation>
        <location>Secreted</location>
    </subcellularLocation>
</comment>
<comment type="tissue specificity">
    <text>Highly expressed in thymus and liver.</text>
</comment>
<comment type="PTM">
    <text evidence="5">Hydroxylated.</text>
</comment>
<comment type="similarity">
    <text evidence="5">Belongs to the SFTPD family.</text>
</comment>
<evidence type="ECO:0000250" key="1"/>
<evidence type="ECO:0000255" key="2"/>
<evidence type="ECO:0000255" key="3">
    <source>
        <dbReference type="PROSITE-ProRule" id="PRU00040"/>
    </source>
</evidence>
<evidence type="ECO:0000256" key="4">
    <source>
        <dbReference type="SAM" id="MobiDB-lite"/>
    </source>
</evidence>
<evidence type="ECO:0000305" key="5"/>
<gene>
    <name type="primary">CL46</name>
</gene>
<accession>Q8MHZ9</accession>
<feature type="signal peptide" evidence="2">
    <location>
        <begin position="1"/>
        <end position="20"/>
    </location>
</feature>
<feature type="chain" id="PRO_0000017372" description="Collectin-46">
    <location>
        <begin position="21"/>
        <end position="371"/>
    </location>
</feature>
<feature type="domain" description="Collagen-like">
    <location>
        <begin position="46"/>
        <end position="216"/>
    </location>
</feature>
<feature type="domain" description="C-type lectin" evidence="3">
    <location>
        <begin position="273"/>
        <end position="371"/>
    </location>
</feature>
<feature type="region of interest" description="Disordered" evidence="4">
    <location>
        <begin position="43"/>
        <end position="215"/>
    </location>
</feature>
<feature type="short sequence motif" description="Cell attachment site" evidence="2">
    <location>
        <begin position="201"/>
        <end position="203"/>
    </location>
</feature>
<feature type="compositionally biased region" description="Basic and acidic residues" evidence="4">
    <location>
        <begin position="51"/>
        <end position="65"/>
    </location>
</feature>
<feature type="compositionally biased region" description="Low complexity" evidence="4">
    <location>
        <begin position="113"/>
        <end position="128"/>
    </location>
</feature>
<feature type="compositionally biased region" description="Gly residues" evidence="4">
    <location>
        <begin position="139"/>
        <end position="148"/>
    </location>
</feature>
<feature type="compositionally biased region" description="Low complexity" evidence="4">
    <location>
        <begin position="170"/>
        <end position="191"/>
    </location>
</feature>
<feature type="compositionally biased region" description="Basic and acidic residues" evidence="4">
    <location>
        <begin position="198"/>
        <end position="210"/>
    </location>
</feature>
<feature type="glycosylation site" description="N-linked (GlcNAc...) asparagine" evidence="2">
    <location>
        <position position="90"/>
    </location>
</feature>
<feature type="disulfide bond" evidence="3">
    <location>
        <begin position="275"/>
        <end position="369"/>
    </location>
</feature>
<feature type="disulfide bond" evidence="3">
    <location>
        <begin position="347"/>
        <end position="361"/>
    </location>
</feature>
<keyword id="KW-0106">Calcium</keyword>
<keyword id="KW-0176">Collagen</keyword>
<keyword id="KW-1015">Disulfide bond</keyword>
<keyword id="KW-0325">Glycoprotein</keyword>
<keyword id="KW-0379">Hydroxylation</keyword>
<keyword id="KW-0430">Lectin</keyword>
<keyword id="KW-0465">Mannose-binding</keyword>
<keyword id="KW-1185">Reference proteome</keyword>
<keyword id="KW-0677">Repeat</keyword>
<keyword id="KW-0964">Secreted</keyword>
<keyword id="KW-0732">Signal</keyword>
<name>CL46_BOVIN</name>
<dbReference type="EMBL" id="AF509589">
    <property type="protein sequence ID" value="AAM34742.1"/>
    <property type="molecule type" value="Genomic_DNA"/>
</dbReference>
<dbReference type="EMBL" id="AF509590">
    <property type="protein sequence ID" value="AAM34743.1"/>
    <property type="molecule type" value="mRNA"/>
</dbReference>
<dbReference type="RefSeq" id="NP_001001856.1">
    <property type="nucleotide sequence ID" value="NM_001001856.1"/>
</dbReference>
<dbReference type="SMR" id="Q8MHZ9"/>
<dbReference type="FunCoup" id="Q8MHZ9">
    <property type="interactions" value="132"/>
</dbReference>
<dbReference type="STRING" id="9913.ENSBTAP00000018649"/>
<dbReference type="GlyCosmos" id="Q8MHZ9">
    <property type="glycosylation" value="1 site, No reported glycans"/>
</dbReference>
<dbReference type="GlyGen" id="Q8MHZ9">
    <property type="glycosylation" value="1 site"/>
</dbReference>
<dbReference type="PaxDb" id="9913-ENSBTAP00000028716"/>
<dbReference type="Ensembl" id="ENSBTAT00000018649.7">
    <property type="protein sequence ID" value="ENSBTAP00000018649.6"/>
    <property type="gene ID" value="ENSBTAG00000006536.7"/>
</dbReference>
<dbReference type="GeneID" id="415114"/>
<dbReference type="KEGG" id="bta:415114"/>
<dbReference type="CTD" id="415114"/>
<dbReference type="VEuPathDB" id="HostDB:ENSBTAG00000006536"/>
<dbReference type="eggNOG" id="KOG4297">
    <property type="taxonomic scope" value="Eukaryota"/>
</dbReference>
<dbReference type="GeneTree" id="ENSGT00940000155748"/>
<dbReference type="InParanoid" id="Q8MHZ9"/>
<dbReference type="OMA" id="CRPPEGG"/>
<dbReference type="OrthoDB" id="10255512at2759"/>
<dbReference type="Proteomes" id="UP000009136">
    <property type="component" value="Chromosome 28"/>
</dbReference>
<dbReference type="Bgee" id="ENSBTAG00000006536">
    <property type="expression patterns" value="Expressed in anterior segment of eyeball and 24 other cell types or tissues"/>
</dbReference>
<dbReference type="GO" id="GO:0005581">
    <property type="term" value="C:collagen trimer"/>
    <property type="evidence" value="ECO:0007669"/>
    <property type="project" value="UniProtKB-KW"/>
</dbReference>
<dbReference type="GO" id="GO:0005615">
    <property type="term" value="C:extracellular space"/>
    <property type="evidence" value="ECO:0000318"/>
    <property type="project" value="GO_Central"/>
</dbReference>
<dbReference type="GO" id="GO:0005771">
    <property type="term" value="C:multivesicular body"/>
    <property type="evidence" value="ECO:0000318"/>
    <property type="project" value="GO_Central"/>
</dbReference>
<dbReference type="GO" id="GO:0005537">
    <property type="term" value="F:D-mannose binding"/>
    <property type="evidence" value="ECO:0007669"/>
    <property type="project" value="UniProtKB-KW"/>
</dbReference>
<dbReference type="GO" id="GO:0050766">
    <property type="term" value="P:positive regulation of phagocytosis"/>
    <property type="evidence" value="ECO:0000318"/>
    <property type="project" value="GO_Central"/>
</dbReference>
<dbReference type="GO" id="GO:0043129">
    <property type="term" value="P:surfactant homeostasis"/>
    <property type="evidence" value="ECO:0000318"/>
    <property type="project" value="GO_Central"/>
</dbReference>
<dbReference type="FunFam" id="1.20.5.360:FF:000001">
    <property type="entry name" value="Pulmonary surfactant-associated protein D"/>
    <property type="match status" value="1"/>
</dbReference>
<dbReference type="FunFam" id="3.10.100.10:FF:000045">
    <property type="entry name" value="Pulmonary surfactant-associated protein D"/>
    <property type="match status" value="1"/>
</dbReference>
<dbReference type="Gene3D" id="3.10.100.10">
    <property type="entry name" value="Mannose-Binding Protein A, subunit A"/>
    <property type="match status" value="1"/>
</dbReference>
<dbReference type="Gene3D" id="1.20.5.360">
    <property type="entry name" value="SFTPD helical domain"/>
    <property type="match status" value="1"/>
</dbReference>
<dbReference type="InterPro" id="IPR001304">
    <property type="entry name" value="C-type_lectin-like"/>
</dbReference>
<dbReference type="InterPro" id="IPR016186">
    <property type="entry name" value="C-type_lectin-like/link_sf"/>
</dbReference>
<dbReference type="InterPro" id="IPR018378">
    <property type="entry name" value="C-type_lectin_CS"/>
</dbReference>
<dbReference type="InterPro" id="IPR051077">
    <property type="entry name" value="Ca-dependent_lectin"/>
</dbReference>
<dbReference type="InterPro" id="IPR008160">
    <property type="entry name" value="Collagen"/>
</dbReference>
<dbReference type="InterPro" id="IPR016187">
    <property type="entry name" value="CTDL_fold"/>
</dbReference>
<dbReference type="InterPro" id="IPR015097">
    <property type="entry name" value="Surfac_D-trimer"/>
</dbReference>
<dbReference type="PANTHER" id="PTHR24024">
    <property type="entry name" value="PULMONARY SURFACTANT-ASSOCIATED PROTEIN A"/>
    <property type="match status" value="1"/>
</dbReference>
<dbReference type="PANTHER" id="PTHR24024:SF15">
    <property type="entry name" value="PULMONARY SURFACTANT-ASSOCIATED PROTEIN D"/>
    <property type="match status" value="1"/>
</dbReference>
<dbReference type="Pfam" id="PF01391">
    <property type="entry name" value="Collagen"/>
    <property type="match status" value="2"/>
</dbReference>
<dbReference type="Pfam" id="PF00059">
    <property type="entry name" value="Lectin_C"/>
    <property type="match status" value="1"/>
</dbReference>
<dbReference type="Pfam" id="PF09006">
    <property type="entry name" value="Surfac_D-trimer"/>
    <property type="match status" value="1"/>
</dbReference>
<dbReference type="SMART" id="SM00034">
    <property type="entry name" value="CLECT"/>
    <property type="match status" value="1"/>
</dbReference>
<dbReference type="SUPFAM" id="SSF56436">
    <property type="entry name" value="C-type lectin-like"/>
    <property type="match status" value="1"/>
</dbReference>
<dbReference type="SUPFAM" id="SSF57944">
    <property type="entry name" value="Triple coiled coil domain of C-type lectins"/>
    <property type="match status" value="1"/>
</dbReference>
<dbReference type="PROSITE" id="PS00615">
    <property type="entry name" value="C_TYPE_LECTIN_1"/>
    <property type="match status" value="1"/>
</dbReference>
<dbReference type="PROSITE" id="PS50041">
    <property type="entry name" value="C_TYPE_LECTIN_2"/>
    <property type="match status" value="1"/>
</dbReference>